<proteinExistence type="evidence at protein level"/>
<sequence>MSPLARTPRKTSVLDTVEHAATTPDQPQPYGELGLKDDEYRRIRQILGRRPTDTELAMYSVMWSEHCSYKSSKVHLRYFGETTSDEMRAAMLAGIGENAGVVDIGDGWAVTFKVESHNHPSYVEPYQGAATGVGGIVRDIMAMGARPVAVMDQLRFGAADAPDTRRVLDGVVRGIGGYGNSLGLPNIGGETVFDPCYAGNPLVNALCVGVLRQEDLHLAFASGAGNKIILFGARTGLDGIGGVSVLASDTFDAEGSRKKLPSVQVGDPFMEKVLIECCLELYAGGLVIGIQDLGGAGLSCATSELASAGDGGMTIQLDSVPLRAKEMTPAEVLCSESQERMCAVVSPKNVDAFLAVCRKWEVLATVIGEVTDGDRLQITWHGETVVDVPPRTVAHEGPVYQRPVARPDTQDALNADRSAKLSRPVTGDELRATLLALLGSPHLCSRAFITEQYDRYVRGNTVLAEHADGGMLRIDESTGRGIAVSTDASGRYTLLDPYAGAQLALAEAYRNVAVTGATPVAVTNCLNFGSPEDPGVMWQFTQAVRGLADGCADLGIPVTGGNVSFYNQTGSAAILPTPVVGVLGVIDDVRRRIPTGLGAEPGETLMLLGDTRDEFDGSVWAQVTADHLGGLPPVVDLAREKLLAAVLSSASRDGLVSAAHDLSEGGLAQAIVESALAGETGCRIVLPEGADPFVLLFSESAGRVLVAVPRTEESRFRGMCEARGLPAVRIGVVDQGSDAVEVQGLFAVSLAELRATSEAVLPRYFG</sequence>
<feature type="chain" id="PRO_0000100473" description="Phosphoribosylformylglycinamidine synthase subunit PurL">
    <location>
        <begin position="1"/>
        <end position="766"/>
    </location>
</feature>
<feature type="active site" evidence="1">
    <location>
        <position position="66"/>
    </location>
</feature>
<feature type="active site" description="Proton acceptor" evidence="1">
    <location>
        <position position="117"/>
    </location>
</feature>
<feature type="binding site" evidence="1">
    <location>
        <position position="69"/>
    </location>
    <ligand>
        <name>ATP</name>
        <dbReference type="ChEBI" id="CHEBI:30616"/>
    </ligand>
</feature>
<feature type="binding site" evidence="1">
    <location>
        <position position="113"/>
    </location>
    <ligand>
        <name>ATP</name>
        <dbReference type="ChEBI" id="CHEBI:30616"/>
    </ligand>
</feature>
<feature type="binding site" evidence="1">
    <location>
        <position position="115"/>
    </location>
    <ligand>
        <name>Mg(2+)</name>
        <dbReference type="ChEBI" id="CHEBI:18420"/>
        <label>1</label>
    </ligand>
</feature>
<feature type="binding site" evidence="1">
    <location>
        <begin position="116"/>
        <end position="119"/>
    </location>
    <ligand>
        <name>substrate</name>
    </ligand>
</feature>
<feature type="binding site" evidence="1">
    <location>
        <position position="138"/>
    </location>
    <ligand>
        <name>substrate</name>
    </ligand>
</feature>
<feature type="binding site" evidence="1">
    <location>
        <position position="139"/>
    </location>
    <ligand>
        <name>Mg(2+)</name>
        <dbReference type="ChEBI" id="CHEBI:18420"/>
        <label>2</label>
    </ligand>
</feature>
<feature type="binding site" evidence="1">
    <location>
        <position position="264"/>
    </location>
    <ligand>
        <name>substrate</name>
    </ligand>
</feature>
<feature type="binding site" evidence="1">
    <location>
        <position position="292"/>
    </location>
    <ligand>
        <name>Mg(2+)</name>
        <dbReference type="ChEBI" id="CHEBI:18420"/>
        <label>2</label>
    </ligand>
</feature>
<feature type="binding site" evidence="1">
    <location>
        <begin position="336"/>
        <end position="338"/>
    </location>
    <ligand>
        <name>substrate</name>
    </ligand>
</feature>
<feature type="binding site" evidence="1">
    <location>
        <position position="524"/>
    </location>
    <ligand>
        <name>ATP</name>
        <dbReference type="ChEBI" id="CHEBI:30616"/>
    </ligand>
</feature>
<feature type="binding site" evidence="1">
    <location>
        <position position="561"/>
    </location>
    <ligand>
        <name>ATP</name>
        <dbReference type="ChEBI" id="CHEBI:30616"/>
    </ligand>
</feature>
<feature type="binding site" evidence="1">
    <location>
        <position position="562"/>
    </location>
    <ligand>
        <name>Mg(2+)</name>
        <dbReference type="ChEBI" id="CHEBI:18420"/>
        <label>1</label>
    </ligand>
</feature>
<feature type="binding site" evidence="1">
    <location>
        <position position="564"/>
    </location>
    <ligand>
        <name>substrate</name>
    </ligand>
</feature>
<feature type="sequence conflict" description="In Ref. 1; AAB41455." evidence="4" ref="1">
    <original>G</original>
    <variation>D</variation>
    <location>
        <position position="48"/>
    </location>
</feature>
<feature type="sequence conflict" description="In Ref. 1; AAB41455." evidence="4" ref="1">
    <original>K</original>
    <variation>A</variation>
    <location>
        <position position="73"/>
    </location>
</feature>
<feature type="sequence conflict" description="In Ref. 1; AAB41455." evidence="4" ref="1">
    <original>A</original>
    <variation>V</variation>
    <location>
        <position position="90"/>
    </location>
</feature>
<feature type="sequence conflict" description="In Ref. 1; AAB41455." evidence="4" ref="1">
    <original>A</original>
    <variation>V</variation>
    <location>
        <position position="93"/>
    </location>
</feature>
<feature type="sequence conflict" description="In Ref. 1; AAB41455." evidence="4" ref="1">
    <original>A</original>
    <variation>P</variation>
    <location>
        <position position="130"/>
    </location>
</feature>
<keyword id="KW-0067">ATP-binding</keyword>
<keyword id="KW-0963">Cytoplasm</keyword>
<keyword id="KW-0903">Direct protein sequencing</keyword>
<keyword id="KW-0436">Ligase</keyword>
<keyword id="KW-0460">Magnesium</keyword>
<keyword id="KW-0479">Metal-binding</keyword>
<keyword id="KW-0547">Nucleotide-binding</keyword>
<keyword id="KW-0658">Purine biosynthesis</keyword>
<keyword id="KW-1185">Reference proteome</keyword>
<evidence type="ECO:0000255" key="1">
    <source>
        <dbReference type="HAMAP-Rule" id="MF_00420"/>
    </source>
</evidence>
<evidence type="ECO:0000269" key="2">
    <source>
    </source>
</evidence>
<evidence type="ECO:0000269" key="3">
    <source>
    </source>
</evidence>
<evidence type="ECO:0000305" key="4"/>
<organism>
    <name type="scientific">Mycobacterium tuberculosis (strain ATCC 25618 / H37Rv)</name>
    <dbReference type="NCBI Taxonomy" id="83332"/>
    <lineage>
        <taxon>Bacteria</taxon>
        <taxon>Bacillati</taxon>
        <taxon>Actinomycetota</taxon>
        <taxon>Actinomycetes</taxon>
        <taxon>Mycobacteriales</taxon>
        <taxon>Mycobacteriaceae</taxon>
        <taxon>Mycobacterium</taxon>
        <taxon>Mycobacterium tuberculosis complex</taxon>
    </lineage>
</organism>
<gene>
    <name evidence="1" type="primary">purL</name>
    <name type="ordered locus">Rv0803</name>
    <name type="ORF">MTCY07H7A.06c</name>
</gene>
<reference key="1">
    <citation type="journal article" date="1996" name="Microbiology">
        <title>The Mycobacterium tuberculosis purine biosynthetic pathway: isolation and characterization of the purC and purL genes.</title>
        <authorList>
            <person name="Jackson M."/>
            <person name="Berthet F.-X."/>
            <person name="Otal I."/>
            <person name="Rauzier J."/>
            <person name="Martin C."/>
            <person name="Gicquel B."/>
            <person name="Guilhot C."/>
        </authorList>
    </citation>
    <scope>NUCLEOTIDE SEQUENCE [GENOMIC DNA]</scope>
    <scope>FUNCTION</scope>
    <source>
        <strain>ATCC 25618 / H37Rv</strain>
    </source>
</reference>
<reference key="2">
    <citation type="journal article" date="1998" name="Nature">
        <title>Deciphering the biology of Mycobacterium tuberculosis from the complete genome sequence.</title>
        <authorList>
            <person name="Cole S.T."/>
            <person name="Brosch R."/>
            <person name="Parkhill J."/>
            <person name="Garnier T."/>
            <person name="Churcher C.M."/>
            <person name="Harris D.E."/>
            <person name="Gordon S.V."/>
            <person name="Eiglmeier K."/>
            <person name="Gas S."/>
            <person name="Barry C.E. III"/>
            <person name="Tekaia F."/>
            <person name="Badcock K."/>
            <person name="Basham D."/>
            <person name="Brown D."/>
            <person name="Chillingworth T."/>
            <person name="Connor R."/>
            <person name="Davies R.M."/>
            <person name="Devlin K."/>
            <person name="Feltwell T."/>
            <person name="Gentles S."/>
            <person name="Hamlin N."/>
            <person name="Holroyd S."/>
            <person name="Hornsby T."/>
            <person name="Jagels K."/>
            <person name="Krogh A."/>
            <person name="McLean J."/>
            <person name="Moule S."/>
            <person name="Murphy L.D."/>
            <person name="Oliver S."/>
            <person name="Osborne J."/>
            <person name="Quail M.A."/>
            <person name="Rajandream M.A."/>
            <person name="Rogers J."/>
            <person name="Rutter S."/>
            <person name="Seeger K."/>
            <person name="Skelton S."/>
            <person name="Squares S."/>
            <person name="Squares R."/>
            <person name="Sulston J.E."/>
            <person name="Taylor K."/>
            <person name="Whitehead S."/>
            <person name="Barrell B.G."/>
        </authorList>
    </citation>
    <scope>NUCLEOTIDE SEQUENCE [LARGE SCALE GENOMIC DNA]</scope>
    <source>
        <strain>ATCC 25618 / H37Rv</strain>
    </source>
</reference>
<reference key="3">
    <citation type="journal article" date="2022" name="Genomics">
        <title>Deep N-terminomics of Mycobacterium tuberculosis H37Rv extensively correct annotated encoding genes.</title>
        <authorList>
            <person name="Shi J."/>
            <person name="Meng S."/>
            <person name="Wan L."/>
            <person name="Zhang Z."/>
            <person name="Jiang S."/>
            <person name="Zhu H."/>
            <person name="Dai E."/>
            <person name="Chang L."/>
            <person name="Gao H."/>
            <person name="Wan K."/>
            <person name="Zhang L."/>
            <person name="Zhao X."/>
            <person name="Liu H."/>
            <person name="Lyu Z."/>
            <person name="Zhang Y."/>
            <person name="Xu P."/>
        </authorList>
    </citation>
    <scope>PROTEIN SEQUENCE OF 10-42</scope>
    <scope>SEQUENCE REVISION TO N-TERMINUS</scope>
    <source>
        <strain>H37Rv</strain>
    </source>
</reference>
<reference key="4">
    <citation type="journal article" date="2011" name="Mol. Cell. Proteomics">
        <title>Proteogenomic analysis of Mycobacterium tuberculosis by high resolution mass spectrometry.</title>
        <authorList>
            <person name="Kelkar D.S."/>
            <person name="Kumar D."/>
            <person name="Kumar P."/>
            <person name="Balakrishnan L."/>
            <person name="Muthusamy B."/>
            <person name="Yadav A.K."/>
            <person name="Shrivastava P."/>
            <person name="Marimuthu A."/>
            <person name="Anand S."/>
            <person name="Sundaram H."/>
            <person name="Kingsbury R."/>
            <person name="Harsha H.C."/>
            <person name="Nair B."/>
            <person name="Prasad T.S."/>
            <person name="Chauhan D.S."/>
            <person name="Katoch K."/>
            <person name="Katoch V.M."/>
            <person name="Kumar P."/>
            <person name="Chaerkady R."/>
            <person name="Ramachandran S."/>
            <person name="Dash D."/>
            <person name="Pandey A."/>
        </authorList>
    </citation>
    <scope>IDENTIFICATION BY MASS SPECTROMETRY [LARGE SCALE ANALYSIS]</scope>
    <source>
        <strain>ATCC 25618 / H37Rv</strain>
    </source>
</reference>
<name>PURL_MYCTU</name>
<comment type="function">
    <text evidence="1 3">Part of the phosphoribosylformylglycinamidine synthase complex involved in the purines biosynthetic pathway. Catalyzes the ATP-dependent conversion of formylglycinamide ribonucleotide (FGAR) and glutamine to yield formylglycinamidine ribonucleotide (FGAM) and glutamate. The FGAM synthase complex is composed of three subunits. PurQ produces an ammonia molecule by converting glutamine to glutamate. PurL transfers the ammonia molecule to FGAR to form FGAM in an ATP-dependent manner. PurS interacts with PurQ and PurL and is thought to assist in the transfer of the ammonia molecule from PurQ to PurL.</text>
</comment>
<comment type="catalytic activity">
    <reaction evidence="1">
        <text>N(2)-formyl-N(1)-(5-phospho-beta-D-ribosyl)glycinamide + L-glutamine + ATP + H2O = 2-formamido-N(1)-(5-O-phospho-beta-D-ribosyl)acetamidine + L-glutamate + ADP + phosphate + H(+)</text>
        <dbReference type="Rhea" id="RHEA:17129"/>
        <dbReference type="ChEBI" id="CHEBI:15377"/>
        <dbReference type="ChEBI" id="CHEBI:15378"/>
        <dbReference type="ChEBI" id="CHEBI:29985"/>
        <dbReference type="ChEBI" id="CHEBI:30616"/>
        <dbReference type="ChEBI" id="CHEBI:43474"/>
        <dbReference type="ChEBI" id="CHEBI:58359"/>
        <dbReference type="ChEBI" id="CHEBI:147286"/>
        <dbReference type="ChEBI" id="CHEBI:147287"/>
        <dbReference type="ChEBI" id="CHEBI:456216"/>
        <dbReference type="EC" id="6.3.5.3"/>
    </reaction>
</comment>
<comment type="pathway">
    <text evidence="1">Purine metabolism; IMP biosynthesis via de novo pathway; 5-amino-1-(5-phospho-D-ribosyl)imidazole from N(2)-formyl-N(1)-(5-phospho-D-ribosyl)glycinamide: step 1/2.</text>
</comment>
<comment type="subunit">
    <text evidence="1">Monomer. Part of the FGAM synthase complex composed of 1 PurL, 1 PurQ and 2 PurS subunits.</text>
</comment>
<comment type="subcellular location">
    <subcellularLocation>
        <location evidence="1">Cytoplasm</location>
    </subcellularLocation>
</comment>
<comment type="similarity">
    <text evidence="1">Belongs to the FGAMS family.</text>
</comment>
<comment type="sequence caution" evidence="2">
    <conflict type="erroneous initiation">
        <sequence resource="EMBL-CDS" id="AAB41455"/>
    </conflict>
    <text>Truncated N-terminus.</text>
</comment>
<comment type="sequence caution" evidence="2">
    <conflict type="erroneous initiation">
        <sequence resource="EMBL-CDS" id="CCP43551"/>
    </conflict>
    <text>Truncated N-terminus.</text>
</comment>
<protein>
    <recommendedName>
        <fullName evidence="1">Phosphoribosylformylglycinamidine synthase subunit PurL</fullName>
        <shortName evidence="1">FGAM synthase</shortName>
        <ecNumber evidence="1">6.3.5.3</ecNumber>
    </recommendedName>
    <alternativeName>
        <fullName evidence="1">Formylglycinamide ribonucleotide amidotransferase subunit II</fullName>
        <shortName evidence="1">FGAR amidotransferase II</shortName>
        <shortName evidence="1">FGAR-AT II</shortName>
    </alternativeName>
    <alternativeName>
        <fullName evidence="1">Glutamine amidotransferase PurL</fullName>
    </alternativeName>
    <alternativeName>
        <fullName evidence="1">Phosphoribosylformylglycinamidine synthase subunit II</fullName>
    </alternativeName>
</protein>
<dbReference type="EC" id="6.3.5.3" evidence="1"/>
<dbReference type="EMBL" id="U34956">
    <property type="protein sequence ID" value="AAB41455.1"/>
    <property type="status" value="ALT_INIT"/>
    <property type="molecule type" value="Genomic_DNA"/>
</dbReference>
<dbReference type="EMBL" id="AL123456">
    <property type="protein sequence ID" value="CCP43551.1"/>
    <property type="status" value="ALT_INIT"/>
    <property type="molecule type" value="Genomic_DNA"/>
</dbReference>
<dbReference type="PIR" id="D70536">
    <property type="entry name" value="D70536"/>
</dbReference>
<dbReference type="RefSeq" id="NP_215318.1">
    <property type="nucleotide sequence ID" value="NC_000962.3"/>
</dbReference>
<dbReference type="SMR" id="P9WHL7"/>
<dbReference type="FunCoup" id="P9WHL7">
    <property type="interactions" value="330"/>
</dbReference>
<dbReference type="STRING" id="83332.Rv0803"/>
<dbReference type="PaxDb" id="83332-Rv0803"/>
<dbReference type="DNASU" id="885358"/>
<dbReference type="GeneID" id="885358"/>
<dbReference type="KEGG" id="mtu:Rv0803"/>
<dbReference type="PATRIC" id="fig|83332.12.peg.897"/>
<dbReference type="TubercuList" id="Rv0803"/>
<dbReference type="eggNOG" id="COG0046">
    <property type="taxonomic scope" value="Bacteria"/>
</dbReference>
<dbReference type="InParanoid" id="P9WHL7"/>
<dbReference type="OrthoDB" id="9804441at2"/>
<dbReference type="UniPathway" id="UPA00074">
    <property type="reaction ID" value="UER00128"/>
</dbReference>
<dbReference type="Proteomes" id="UP000001584">
    <property type="component" value="Chromosome"/>
</dbReference>
<dbReference type="GO" id="GO:0005737">
    <property type="term" value="C:cytoplasm"/>
    <property type="evidence" value="ECO:0007669"/>
    <property type="project" value="UniProtKB-SubCell"/>
</dbReference>
<dbReference type="GO" id="GO:0005524">
    <property type="term" value="F:ATP binding"/>
    <property type="evidence" value="ECO:0007669"/>
    <property type="project" value="UniProtKB-UniRule"/>
</dbReference>
<dbReference type="GO" id="GO:0000287">
    <property type="term" value="F:magnesium ion binding"/>
    <property type="evidence" value="ECO:0007669"/>
    <property type="project" value="UniProtKB-UniRule"/>
</dbReference>
<dbReference type="GO" id="GO:0004642">
    <property type="term" value="F:phosphoribosylformylglycinamidine synthase activity"/>
    <property type="evidence" value="ECO:0000318"/>
    <property type="project" value="GO_Central"/>
</dbReference>
<dbReference type="GO" id="GO:0006189">
    <property type="term" value="P:'de novo' IMP biosynthetic process"/>
    <property type="evidence" value="ECO:0007669"/>
    <property type="project" value="UniProtKB-UniRule"/>
</dbReference>
<dbReference type="GO" id="GO:0006164">
    <property type="term" value="P:purine nucleotide biosynthetic process"/>
    <property type="evidence" value="ECO:0000315"/>
    <property type="project" value="MTBBASE"/>
</dbReference>
<dbReference type="CDD" id="cd02203">
    <property type="entry name" value="PurL_repeat1"/>
    <property type="match status" value="1"/>
</dbReference>
<dbReference type="CDD" id="cd02204">
    <property type="entry name" value="PurL_repeat2"/>
    <property type="match status" value="1"/>
</dbReference>
<dbReference type="FunFam" id="3.30.1330.10:FF:000004">
    <property type="entry name" value="Phosphoribosylformylglycinamidine synthase subunit PurL"/>
    <property type="match status" value="1"/>
</dbReference>
<dbReference type="FunFam" id="3.30.1330.10:FF:000021">
    <property type="entry name" value="Phosphoribosylformylglycinamidine synthase subunit PurL"/>
    <property type="match status" value="1"/>
</dbReference>
<dbReference type="FunFam" id="3.90.650.10:FF:000009">
    <property type="entry name" value="Phosphoribosylformylglycinamidine synthase subunit PurL"/>
    <property type="match status" value="1"/>
</dbReference>
<dbReference type="FunFam" id="3.90.650.10:FF:000026">
    <property type="entry name" value="Phosphoribosylformylglycinamidine synthase subunit PurL"/>
    <property type="match status" value="1"/>
</dbReference>
<dbReference type="Gene3D" id="3.90.650.10">
    <property type="entry name" value="PurM-like C-terminal domain"/>
    <property type="match status" value="2"/>
</dbReference>
<dbReference type="Gene3D" id="3.30.1330.10">
    <property type="entry name" value="PurM-like, N-terminal domain"/>
    <property type="match status" value="2"/>
</dbReference>
<dbReference type="HAMAP" id="MF_00420">
    <property type="entry name" value="PurL_2"/>
    <property type="match status" value="1"/>
</dbReference>
<dbReference type="InterPro" id="IPR010074">
    <property type="entry name" value="PRibForGlyAmidine_synth_PurL"/>
</dbReference>
<dbReference type="InterPro" id="IPR041609">
    <property type="entry name" value="PurL_linker"/>
</dbReference>
<dbReference type="InterPro" id="IPR010918">
    <property type="entry name" value="PurM-like_C_dom"/>
</dbReference>
<dbReference type="InterPro" id="IPR036676">
    <property type="entry name" value="PurM-like_C_sf"/>
</dbReference>
<dbReference type="InterPro" id="IPR016188">
    <property type="entry name" value="PurM-like_N"/>
</dbReference>
<dbReference type="InterPro" id="IPR036921">
    <property type="entry name" value="PurM-like_N_sf"/>
</dbReference>
<dbReference type="NCBIfam" id="TIGR01736">
    <property type="entry name" value="FGAM_synth_II"/>
    <property type="match status" value="1"/>
</dbReference>
<dbReference type="NCBIfam" id="NF002290">
    <property type="entry name" value="PRK01213.1"/>
    <property type="match status" value="1"/>
</dbReference>
<dbReference type="PANTHER" id="PTHR43555">
    <property type="entry name" value="PHOSPHORIBOSYLFORMYLGLYCINAMIDINE SYNTHASE SUBUNIT PURL"/>
    <property type="match status" value="1"/>
</dbReference>
<dbReference type="PANTHER" id="PTHR43555:SF1">
    <property type="entry name" value="PHOSPHORIBOSYLFORMYLGLYCINAMIDINE SYNTHASE SUBUNIT PURL"/>
    <property type="match status" value="1"/>
</dbReference>
<dbReference type="Pfam" id="PF00586">
    <property type="entry name" value="AIRS"/>
    <property type="match status" value="2"/>
</dbReference>
<dbReference type="Pfam" id="PF02769">
    <property type="entry name" value="AIRS_C"/>
    <property type="match status" value="2"/>
</dbReference>
<dbReference type="Pfam" id="PF18072">
    <property type="entry name" value="FGAR-AT_linker"/>
    <property type="match status" value="1"/>
</dbReference>
<dbReference type="PIRSF" id="PIRSF001587">
    <property type="entry name" value="FGAM_synthase_II"/>
    <property type="match status" value="1"/>
</dbReference>
<dbReference type="SUPFAM" id="SSF56042">
    <property type="entry name" value="PurM C-terminal domain-like"/>
    <property type="match status" value="2"/>
</dbReference>
<dbReference type="SUPFAM" id="SSF55326">
    <property type="entry name" value="PurM N-terminal domain-like"/>
    <property type="match status" value="2"/>
</dbReference>
<accession>P9WHL7</accession>
<accession>L0T4Y4</accession>
<accession>O06631</accession>
<accession>P0A5T8</accession>
<accession>P54876</accession>